<organism>
    <name type="scientific">Acinetobacter baumannii (strain AB0057)</name>
    <dbReference type="NCBI Taxonomy" id="480119"/>
    <lineage>
        <taxon>Bacteria</taxon>
        <taxon>Pseudomonadati</taxon>
        <taxon>Pseudomonadota</taxon>
        <taxon>Gammaproteobacteria</taxon>
        <taxon>Moraxellales</taxon>
        <taxon>Moraxellaceae</taxon>
        <taxon>Acinetobacter</taxon>
        <taxon>Acinetobacter calcoaceticus/baumannii complex</taxon>
    </lineage>
</organism>
<evidence type="ECO:0000255" key="1">
    <source>
        <dbReference type="HAMAP-Rule" id="MF_01400"/>
    </source>
</evidence>
<evidence type="ECO:0000255" key="2">
    <source>
        <dbReference type="PROSITE-ProRule" id="PRU01126"/>
    </source>
</evidence>
<proteinExistence type="inferred from homology"/>
<feature type="chain" id="PRO_1000145344" description="Peptide methionine sulfoxide reductase MsrB">
    <location>
        <begin position="1"/>
        <end position="139"/>
    </location>
</feature>
<feature type="domain" description="MsrB" evidence="2">
    <location>
        <begin position="8"/>
        <end position="130"/>
    </location>
</feature>
<feature type="active site" description="Nucleophile" evidence="2">
    <location>
        <position position="119"/>
    </location>
</feature>
<feature type="binding site" evidence="2">
    <location>
        <position position="47"/>
    </location>
    <ligand>
        <name>Zn(2+)</name>
        <dbReference type="ChEBI" id="CHEBI:29105"/>
    </ligand>
</feature>
<feature type="binding site" evidence="2">
    <location>
        <position position="50"/>
    </location>
    <ligand>
        <name>Zn(2+)</name>
        <dbReference type="ChEBI" id="CHEBI:29105"/>
    </ligand>
</feature>
<feature type="binding site" evidence="2">
    <location>
        <position position="96"/>
    </location>
    <ligand>
        <name>Zn(2+)</name>
        <dbReference type="ChEBI" id="CHEBI:29105"/>
    </ligand>
</feature>
<feature type="binding site" evidence="2">
    <location>
        <position position="99"/>
    </location>
    <ligand>
        <name>Zn(2+)</name>
        <dbReference type="ChEBI" id="CHEBI:29105"/>
    </ligand>
</feature>
<accession>B7I415</accession>
<reference key="1">
    <citation type="journal article" date="2008" name="J. Bacteriol.">
        <title>Comparative genome sequence analysis of multidrug-resistant Acinetobacter baumannii.</title>
        <authorList>
            <person name="Adams M.D."/>
            <person name="Goglin K."/>
            <person name="Molyneaux N."/>
            <person name="Hujer K.M."/>
            <person name="Lavender H."/>
            <person name="Jamison J.J."/>
            <person name="MacDonald I.J."/>
            <person name="Martin K.M."/>
            <person name="Russo T."/>
            <person name="Campagnari A.A."/>
            <person name="Hujer A.M."/>
            <person name="Bonomo R.A."/>
            <person name="Gill S.R."/>
        </authorList>
    </citation>
    <scope>NUCLEOTIDE SEQUENCE [LARGE SCALE GENOMIC DNA]</scope>
    <source>
        <strain>AB0057</strain>
    </source>
</reference>
<protein>
    <recommendedName>
        <fullName evidence="1">Peptide methionine sulfoxide reductase MsrB</fullName>
        <ecNumber evidence="1">1.8.4.12</ecNumber>
    </recommendedName>
    <alternativeName>
        <fullName evidence="1">Peptide-methionine (R)-S-oxide reductase</fullName>
    </alternativeName>
</protein>
<dbReference type="EC" id="1.8.4.12" evidence="1"/>
<dbReference type="EMBL" id="CP001182">
    <property type="protein sequence ID" value="ACJ41084.1"/>
    <property type="molecule type" value="Genomic_DNA"/>
</dbReference>
<dbReference type="RefSeq" id="WP_000521160.1">
    <property type="nucleotide sequence ID" value="NC_011586.2"/>
</dbReference>
<dbReference type="SMR" id="B7I415"/>
<dbReference type="GeneID" id="92893679"/>
<dbReference type="KEGG" id="abn:AB57_1700"/>
<dbReference type="HOGENOM" id="CLU_031040_8_5_6"/>
<dbReference type="Proteomes" id="UP000007094">
    <property type="component" value="Chromosome"/>
</dbReference>
<dbReference type="GO" id="GO:0005737">
    <property type="term" value="C:cytoplasm"/>
    <property type="evidence" value="ECO:0007669"/>
    <property type="project" value="TreeGrafter"/>
</dbReference>
<dbReference type="GO" id="GO:0033743">
    <property type="term" value="F:peptide-methionine (R)-S-oxide reductase activity"/>
    <property type="evidence" value="ECO:0007669"/>
    <property type="project" value="UniProtKB-UniRule"/>
</dbReference>
<dbReference type="GO" id="GO:0008270">
    <property type="term" value="F:zinc ion binding"/>
    <property type="evidence" value="ECO:0007669"/>
    <property type="project" value="UniProtKB-UniRule"/>
</dbReference>
<dbReference type="GO" id="GO:0030091">
    <property type="term" value="P:protein repair"/>
    <property type="evidence" value="ECO:0007669"/>
    <property type="project" value="InterPro"/>
</dbReference>
<dbReference type="GO" id="GO:0006979">
    <property type="term" value="P:response to oxidative stress"/>
    <property type="evidence" value="ECO:0007669"/>
    <property type="project" value="InterPro"/>
</dbReference>
<dbReference type="FunFam" id="2.170.150.20:FF:000001">
    <property type="entry name" value="Peptide methionine sulfoxide reductase MsrB"/>
    <property type="match status" value="1"/>
</dbReference>
<dbReference type="Gene3D" id="2.170.150.20">
    <property type="entry name" value="Peptide methionine sulfoxide reductase"/>
    <property type="match status" value="1"/>
</dbReference>
<dbReference type="HAMAP" id="MF_01400">
    <property type="entry name" value="MsrB"/>
    <property type="match status" value="1"/>
</dbReference>
<dbReference type="InterPro" id="IPR028427">
    <property type="entry name" value="Met_Sox_Rdtase_MsrB"/>
</dbReference>
<dbReference type="InterPro" id="IPR002579">
    <property type="entry name" value="Met_Sox_Rdtase_MsrB_dom"/>
</dbReference>
<dbReference type="InterPro" id="IPR011057">
    <property type="entry name" value="Mss4-like_sf"/>
</dbReference>
<dbReference type="NCBIfam" id="TIGR00357">
    <property type="entry name" value="peptide-methionine (R)-S-oxide reductase MsrB"/>
    <property type="match status" value="1"/>
</dbReference>
<dbReference type="PANTHER" id="PTHR10173">
    <property type="entry name" value="METHIONINE SULFOXIDE REDUCTASE"/>
    <property type="match status" value="1"/>
</dbReference>
<dbReference type="PANTHER" id="PTHR10173:SF52">
    <property type="entry name" value="METHIONINE-R-SULFOXIDE REDUCTASE B1"/>
    <property type="match status" value="1"/>
</dbReference>
<dbReference type="Pfam" id="PF01641">
    <property type="entry name" value="SelR"/>
    <property type="match status" value="1"/>
</dbReference>
<dbReference type="SUPFAM" id="SSF51316">
    <property type="entry name" value="Mss4-like"/>
    <property type="match status" value="1"/>
</dbReference>
<dbReference type="PROSITE" id="PS51790">
    <property type="entry name" value="MSRB"/>
    <property type="match status" value="1"/>
</dbReference>
<sequence>MGKVNKTDREWQRELSPEEYRITRQKGTEPAFTGQYWNTKQHGTYVCRCCGAELFSSDAKYDSGCGWPSFFRPLNGSVIDEHEDLTHGMVRTEIVCHDCEAHLGHVFEDGPQPTGLRYCVNSASLQLKTQEKNDEETYP</sequence>
<comment type="catalytic activity">
    <reaction evidence="1">
        <text>L-methionyl-[protein] + [thioredoxin]-disulfide + H2O = L-methionyl-(R)-S-oxide-[protein] + [thioredoxin]-dithiol</text>
        <dbReference type="Rhea" id="RHEA:24164"/>
        <dbReference type="Rhea" id="RHEA-COMP:10698"/>
        <dbReference type="Rhea" id="RHEA-COMP:10700"/>
        <dbReference type="Rhea" id="RHEA-COMP:12313"/>
        <dbReference type="Rhea" id="RHEA-COMP:12314"/>
        <dbReference type="ChEBI" id="CHEBI:15377"/>
        <dbReference type="ChEBI" id="CHEBI:16044"/>
        <dbReference type="ChEBI" id="CHEBI:29950"/>
        <dbReference type="ChEBI" id="CHEBI:45764"/>
        <dbReference type="ChEBI" id="CHEBI:50058"/>
        <dbReference type="EC" id="1.8.4.12"/>
    </reaction>
</comment>
<comment type="cofactor">
    <cofactor evidence="1">
        <name>Zn(2+)</name>
        <dbReference type="ChEBI" id="CHEBI:29105"/>
    </cofactor>
    <text evidence="1">Binds 1 zinc ion per subunit. The zinc ion is important for the structural integrity of the protein.</text>
</comment>
<comment type="similarity">
    <text evidence="1">Belongs to the MsrB Met sulfoxide reductase family.</text>
</comment>
<gene>
    <name evidence="1" type="primary">msrB</name>
    <name type="ordered locus">AB57_1700</name>
</gene>
<keyword id="KW-0479">Metal-binding</keyword>
<keyword id="KW-0560">Oxidoreductase</keyword>
<keyword id="KW-0862">Zinc</keyword>
<name>MSRB_ACIB5</name>